<accession>Q9EPR2</accession>
<accession>Q3TQC4</accession>
<accession>Q9CQR3</accession>
<accession>Q9CTL1</accession>
<accession>Q9D7L3</accession>
<accession>Q9EPR1</accession>
<comment type="function">
    <text evidence="1">PA2 catalyzes the calcium-dependent hydrolysis of the 2-acyl groups in 3-sn-phosphoglycerides. Does not exhibit detectable activity toward sn-2-arachidonoyl- or linoleoyl-phosphatidylcholine or -phosphatidylethanolamine (By similarity).</text>
</comment>
<comment type="catalytic activity">
    <reaction evidence="3">
        <text>a 1,2-diacyl-sn-glycero-3-phosphocholine + H2O = a 1-acyl-sn-glycero-3-phosphocholine + a fatty acid + H(+)</text>
        <dbReference type="Rhea" id="RHEA:15801"/>
        <dbReference type="ChEBI" id="CHEBI:15377"/>
        <dbReference type="ChEBI" id="CHEBI:15378"/>
        <dbReference type="ChEBI" id="CHEBI:28868"/>
        <dbReference type="ChEBI" id="CHEBI:57643"/>
        <dbReference type="ChEBI" id="CHEBI:58168"/>
        <dbReference type="EC" id="3.1.1.4"/>
    </reaction>
</comment>
<comment type="cofactor">
    <cofactor evidence="1">
        <name>Ca(2+)</name>
        <dbReference type="ChEBI" id="CHEBI:29108"/>
    </cofactor>
    <text evidence="1">Binds 1 Ca(2+) ion per subunit.</text>
</comment>
<comment type="subcellular location">
    <subcellularLocation>
        <location>Secreted</location>
    </subcellularLocation>
    <subcellularLocation>
        <location evidence="1">Cytoplasm</location>
    </subcellularLocation>
</comment>
<comment type="alternative products">
    <event type="alternative splicing"/>
    <isoform>
        <id>Q9EPR2-1</id>
        <name>1</name>
        <sequence type="displayed"/>
    </isoform>
    <isoform>
        <id>Q9EPR2-2</id>
        <name>2</name>
        <sequence type="described" ref="VSP_004509"/>
    </isoform>
</comment>
<comment type="similarity">
    <text evidence="4">Belongs to the phospholipase A2 family.</text>
</comment>
<keyword id="KW-0025">Alternative splicing</keyword>
<keyword id="KW-0106">Calcium</keyword>
<keyword id="KW-0963">Cytoplasm</keyword>
<keyword id="KW-0378">Hydrolase</keyword>
<keyword id="KW-0442">Lipid degradation</keyword>
<keyword id="KW-0443">Lipid metabolism</keyword>
<keyword id="KW-0479">Metal-binding</keyword>
<keyword id="KW-1185">Reference proteome</keyword>
<keyword id="KW-0964">Secreted</keyword>
<keyword id="KW-0732">Signal</keyword>
<protein>
    <recommendedName>
        <fullName>Group XIIA secretory phospholipase A2</fullName>
        <shortName>GXII sPLA2</shortName>
        <shortName>sPLA2-XII</shortName>
        <ecNumber>3.1.1.4</ecNumber>
    </recommendedName>
    <alternativeName>
        <fullName>Phosphatidylcholine 2-acylhydrolase 12A</fullName>
    </alternativeName>
</protein>
<organism>
    <name type="scientific">Mus musculus</name>
    <name type="common">Mouse</name>
    <dbReference type="NCBI Taxonomy" id="10090"/>
    <lineage>
        <taxon>Eukaryota</taxon>
        <taxon>Metazoa</taxon>
        <taxon>Chordata</taxon>
        <taxon>Craniata</taxon>
        <taxon>Vertebrata</taxon>
        <taxon>Euteleostomi</taxon>
        <taxon>Mammalia</taxon>
        <taxon>Eutheria</taxon>
        <taxon>Euarchontoglires</taxon>
        <taxon>Glires</taxon>
        <taxon>Rodentia</taxon>
        <taxon>Myomorpha</taxon>
        <taxon>Muroidea</taxon>
        <taxon>Muridae</taxon>
        <taxon>Murinae</taxon>
        <taxon>Mus</taxon>
        <taxon>Mus</taxon>
    </lineage>
</organism>
<gene>
    <name type="primary">Pla2g12a</name>
    <name type="synonym">Pla2g12</name>
</gene>
<feature type="signal peptide" evidence="2">
    <location>
        <begin position="1"/>
        <end position="25"/>
    </location>
</feature>
<feature type="chain" id="PRO_0000022771" description="Group XIIA secretory phospholipase A2">
    <location>
        <begin position="26"/>
        <end position="192"/>
    </location>
</feature>
<feature type="active site" evidence="3">
    <location>
        <position position="113"/>
    </location>
</feature>
<feature type="active site" evidence="3">
    <location>
        <position position="128"/>
    </location>
</feature>
<feature type="binding site" evidence="1">
    <location>
        <position position="91"/>
    </location>
    <ligand>
        <name>Ca(2+)</name>
        <dbReference type="ChEBI" id="CHEBI:29108"/>
    </ligand>
</feature>
<feature type="binding site" evidence="1">
    <location>
        <position position="93"/>
    </location>
    <ligand>
        <name>Ca(2+)</name>
        <dbReference type="ChEBI" id="CHEBI:29108"/>
    </ligand>
</feature>
<feature type="binding site" evidence="1">
    <location>
        <position position="95"/>
    </location>
    <ligand>
        <name>Ca(2+)</name>
        <dbReference type="ChEBI" id="CHEBI:29108"/>
    </ligand>
</feature>
<feature type="binding site" evidence="1">
    <location>
        <position position="114"/>
    </location>
    <ligand>
        <name>Ca(2+)</name>
        <dbReference type="ChEBI" id="CHEBI:29108"/>
    </ligand>
</feature>
<feature type="splice variant" id="VSP_004509" description="In isoform 2." evidence="4">
    <original>MVTPRPAPARSPALLLLLLLATARGQEQDQTTDWRATLKTIRNGIHKIDTYLNAALDLLGGEDGLCQYKCSDG</original>
    <variation>MKDYHSGPGKYWEPFAFPVGCSGTEEEEGLRIGR</variation>
    <location>
        <begin position="1"/>
        <end position="73"/>
    </location>
</feature>
<feature type="sequence conflict" description="In Ref. 1; AAG23336." evidence="4" ref="1">
    <original>S</original>
    <variation>G</variation>
    <location>
        <position position="11"/>
    </location>
</feature>
<feature type="sequence conflict" description="In Ref. 2; BAB26094." evidence="4" ref="2">
    <original>P</original>
    <variation>H</variation>
    <location>
        <position position="173"/>
    </location>
</feature>
<evidence type="ECO:0000250" key="1"/>
<evidence type="ECO:0000255" key="2"/>
<evidence type="ECO:0000255" key="3">
    <source>
        <dbReference type="PROSITE-ProRule" id="PRU10035"/>
    </source>
</evidence>
<evidence type="ECO:0000305" key="4"/>
<proteinExistence type="evidence at protein level"/>
<name>PG12A_MOUSE</name>
<reference key="1">
    <citation type="journal article" date="2001" name="J. Biol. Chem.">
        <title>A novel group of phospholipase A2s preferentially expressed in type 2 helper T cells.</title>
        <authorList>
            <person name="Ho I.C."/>
            <person name="Arm J.P."/>
            <person name="Bingham C.O. III"/>
            <person name="Choi A."/>
            <person name="Austen K.F."/>
            <person name="Glimcher L.H."/>
        </authorList>
    </citation>
    <scope>NUCLEOTIDE SEQUENCE [MRNA]</scope>
    <source>
        <strain>AKR/J</strain>
    </source>
</reference>
<reference key="2">
    <citation type="journal article" date="2005" name="Science">
        <title>The transcriptional landscape of the mammalian genome.</title>
        <authorList>
            <person name="Carninci P."/>
            <person name="Kasukawa T."/>
            <person name="Katayama S."/>
            <person name="Gough J."/>
            <person name="Frith M.C."/>
            <person name="Maeda N."/>
            <person name="Oyama R."/>
            <person name="Ravasi T."/>
            <person name="Lenhard B."/>
            <person name="Wells C."/>
            <person name="Kodzius R."/>
            <person name="Shimokawa K."/>
            <person name="Bajic V.B."/>
            <person name="Brenner S.E."/>
            <person name="Batalov S."/>
            <person name="Forrest A.R."/>
            <person name="Zavolan M."/>
            <person name="Davis M.J."/>
            <person name="Wilming L.G."/>
            <person name="Aidinis V."/>
            <person name="Allen J.E."/>
            <person name="Ambesi-Impiombato A."/>
            <person name="Apweiler R."/>
            <person name="Aturaliya R.N."/>
            <person name="Bailey T.L."/>
            <person name="Bansal M."/>
            <person name="Baxter L."/>
            <person name="Beisel K.W."/>
            <person name="Bersano T."/>
            <person name="Bono H."/>
            <person name="Chalk A.M."/>
            <person name="Chiu K.P."/>
            <person name="Choudhary V."/>
            <person name="Christoffels A."/>
            <person name="Clutterbuck D.R."/>
            <person name="Crowe M.L."/>
            <person name="Dalla E."/>
            <person name="Dalrymple B.P."/>
            <person name="de Bono B."/>
            <person name="Della Gatta G."/>
            <person name="di Bernardo D."/>
            <person name="Down T."/>
            <person name="Engstrom P."/>
            <person name="Fagiolini M."/>
            <person name="Faulkner G."/>
            <person name="Fletcher C.F."/>
            <person name="Fukushima T."/>
            <person name="Furuno M."/>
            <person name="Futaki S."/>
            <person name="Gariboldi M."/>
            <person name="Georgii-Hemming P."/>
            <person name="Gingeras T.R."/>
            <person name="Gojobori T."/>
            <person name="Green R.E."/>
            <person name="Gustincich S."/>
            <person name="Harbers M."/>
            <person name="Hayashi Y."/>
            <person name="Hensch T.K."/>
            <person name="Hirokawa N."/>
            <person name="Hill D."/>
            <person name="Huminiecki L."/>
            <person name="Iacono M."/>
            <person name="Ikeo K."/>
            <person name="Iwama A."/>
            <person name="Ishikawa T."/>
            <person name="Jakt M."/>
            <person name="Kanapin A."/>
            <person name="Katoh M."/>
            <person name="Kawasawa Y."/>
            <person name="Kelso J."/>
            <person name="Kitamura H."/>
            <person name="Kitano H."/>
            <person name="Kollias G."/>
            <person name="Krishnan S.P."/>
            <person name="Kruger A."/>
            <person name="Kummerfeld S.K."/>
            <person name="Kurochkin I.V."/>
            <person name="Lareau L.F."/>
            <person name="Lazarevic D."/>
            <person name="Lipovich L."/>
            <person name="Liu J."/>
            <person name="Liuni S."/>
            <person name="McWilliam S."/>
            <person name="Madan Babu M."/>
            <person name="Madera M."/>
            <person name="Marchionni L."/>
            <person name="Matsuda H."/>
            <person name="Matsuzawa S."/>
            <person name="Miki H."/>
            <person name="Mignone F."/>
            <person name="Miyake S."/>
            <person name="Morris K."/>
            <person name="Mottagui-Tabar S."/>
            <person name="Mulder N."/>
            <person name="Nakano N."/>
            <person name="Nakauchi H."/>
            <person name="Ng P."/>
            <person name="Nilsson R."/>
            <person name="Nishiguchi S."/>
            <person name="Nishikawa S."/>
            <person name="Nori F."/>
            <person name="Ohara O."/>
            <person name="Okazaki Y."/>
            <person name="Orlando V."/>
            <person name="Pang K.C."/>
            <person name="Pavan W.J."/>
            <person name="Pavesi G."/>
            <person name="Pesole G."/>
            <person name="Petrovsky N."/>
            <person name="Piazza S."/>
            <person name="Reed J."/>
            <person name="Reid J.F."/>
            <person name="Ring B.Z."/>
            <person name="Ringwald M."/>
            <person name="Rost B."/>
            <person name="Ruan Y."/>
            <person name="Salzberg S.L."/>
            <person name="Sandelin A."/>
            <person name="Schneider C."/>
            <person name="Schoenbach C."/>
            <person name="Sekiguchi K."/>
            <person name="Semple C.A."/>
            <person name="Seno S."/>
            <person name="Sessa L."/>
            <person name="Sheng Y."/>
            <person name="Shibata Y."/>
            <person name="Shimada H."/>
            <person name="Shimada K."/>
            <person name="Silva D."/>
            <person name="Sinclair B."/>
            <person name="Sperling S."/>
            <person name="Stupka E."/>
            <person name="Sugiura K."/>
            <person name="Sultana R."/>
            <person name="Takenaka Y."/>
            <person name="Taki K."/>
            <person name="Tammoja K."/>
            <person name="Tan S.L."/>
            <person name="Tang S."/>
            <person name="Taylor M.S."/>
            <person name="Tegner J."/>
            <person name="Teichmann S.A."/>
            <person name="Ueda H.R."/>
            <person name="van Nimwegen E."/>
            <person name="Verardo R."/>
            <person name="Wei C.L."/>
            <person name="Yagi K."/>
            <person name="Yamanishi H."/>
            <person name="Zabarovsky E."/>
            <person name="Zhu S."/>
            <person name="Zimmer A."/>
            <person name="Hide W."/>
            <person name="Bult C."/>
            <person name="Grimmond S.M."/>
            <person name="Teasdale R.D."/>
            <person name="Liu E.T."/>
            <person name="Brusic V."/>
            <person name="Quackenbush J."/>
            <person name="Wahlestedt C."/>
            <person name="Mattick J.S."/>
            <person name="Hume D.A."/>
            <person name="Kai C."/>
            <person name="Sasaki D."/>
            <person name="Tomaru Y."/>
            <person name="Fukuda S."/>
            <person name="Kanamori-Katayama M."/>
            <person name="Suzuki M."/>
            <person name="Aoki J."/>
            <person name="Arakawa T."/>
            <person name="Iida J."/>
            <person name="Imamura K."/>
            <person name="Itoh M."/>
            <person name="Kato T."/>
            <person name="Kawaji H."/>
            <person name="Kawagashira N."/>
            <person name="Kawashima T."/>
            <person name="Kojima M."/>
            <person name="Kondo S."/>
            <person name="Konno H."/>
            <person name="Nakano K."/>
            <person name="Ninomiya N."/>
            <person name="Nishio T."/>
            <person name="Okada M."/>
            <person name="Plessy C."/>
            <person name="Shibata K."/>
            <person name="Shiraki T."/>
            <person name="Suzuki S."/>
            <person name="Tagami M."/>
            <person name="Waki K."/>
            <person name="Watahiki A."/>
            <person name="Okamura-Oho Y."/>
            <person name="Suzuki H."/>
            <person name="Kawai J."/>
            <person name="Hayashizaki Y."/>
        </authorList>
    </citation>
    <scope>NUCLEOTIDE SEQUENCE [LARGE SCALE MRNA]</scope>
    <source>
        <strain>C57BL/6J</strain>
        <tissue>Cerebellum</tissue>
        <tissue>Embryo</tissue>
        <tissue>Tongue</tissue>
    </source>
</reference>
<reference key="3">
    <citation type="journal article" date="2004" name="Genome Res.">
        <title>The status, quality, and expansion of the NIH full-length cDNA project: the Mammalian Gene Collection (MGC).</title>
        <authorList>
            <consortium name="The MGC Project Team"/>
        </authorList>
    </citation>
    <scope>NUCLEOTIDE SEQUENCE [LARGE SCALE MRNA] (ISOFORM 1)</scope>
    <source>
        <tissue>Olfactory epithelium</tissue>
    </source>
</reference>
<reference key="4">
    <citation type="journal article" date="2010" name="Cell">
        <title>A tissue-specific atlas of mouse protein phosphorylation and expression.</title>
        <authorList>
            <person name="Huttlin E.L."/>
            <person name="Jedrychowski M.P."/>
            <person name="Elias J.E."/>
            <person name="Goswami T."/>
            <person name="Rad R."/>
            <person name="Beausoleil S.A."/>
            <person name="Villen J."/>
            <person name="Haas W."/>
            <person name="Sowa M.E."/>
            <person name="Gygi S.P."/>
        </authorList>
    </citation>
    <scope>IDENTIFICATION BY MASS SPECTROMETRY [LARGE SCALE ANALYSIS]</scope>
    <source>
        <tissue>Liver</tissue>
        <tissue>Lung</tissue>
        <tissue>Pancreas</tissue>
        <tissue>Spleen</tissue>
        <tissue>Testis</tissue>
    </source>
</reference>
<dbReference type="EC" id="3.1.1.4"/>
<dbReference type="EMBL" id="AY007381">
    <property type="protein sequence ID" value="AAG23336.1"/>
    <property type="molecule type" value="mRNA"/>
</dbReference>
<dbReference type="EMBL" id="AY007382">
    <property type="protein sequence ID" value="AAG23337.1"/>
    <property type="molecule type" value="mRNA"/>
</dbReference>
<dbReference type="EMBL" id="AK003183">
    <property type="status" value="NOT_ANNOTATED_CDS"/>
    <property type="molecule type" value="mRNA"/>
</dbReference>
<dbReference type="EMBL" id="AK009133">
    <property type="protein sequence ID" value="BAB26094.1"/>
    <property type="molecule type" value="mRNA"/>
</dbReference>
<dbReference type="EMBL" id="AK010011">
    <property type="protein sequence ID" value="BAB26641.1"/>
    <property type="molecule type" value="mRNA"/>
</dbReference>
<dbReference type="EMBL" id="AK010174">
    <property type="protein sequence ID" value="BAB26747.1"/>
    <property type="molecule type" value="mRNA"/>
</dbReference>
<dbReference type="EMBL" id="AK163693">
    <property type="protein sequence ID" value="BAE37460.1"/>
    <property type="molecule type" value="mRNA"/>
</dbReference>
<dbReference type="EMBL" id="BC051117">
    <property type="protein sequence ID" value="AAH51117.1"/>
    <property type="molecule type" value="mRNA"/>
</dbReference>
<dbReference type="CCDS" id="CCDS17836.1">
    <molecule id="Q9EPR2-1"/>
</dbReference>
<dbReference type="CCDS" id="CCDS17837.1">
    <molecule id="Q9EPR2-2"/>
</dbReference>
<dbReference type="RefSeq" id="NP_075685.2">
    <molecule id="Q9EPR2-1"/>
    <property type="nucleotide sequence ID" value="NM_023196.4"/>
</dbReference>
<dbReference type="RefSeq" id="NP_904359.1">
    <molecule id="Q9EPR2-2"/>
    <property type="nucleotide sequence ID" value="NM_183423.3"/>
</dbReference>
<dbReference type="FunCoup" id="Q9EPR2">
    <property type="interactions" value="903"/>
</dbReference>
<dbReference type="STRING" id="10090.ENSMUSP00000029629"/>
<dbReference type="PhosphoSitePlus" id="Q9EPR2"/>
<dbReference type="jPOST" id="Q9EPR2"/>
<dbReference type="PaxDb" id="10090-ENSMUSP00000029629"/>
<dbReference type="PeptideAtlas" id="Q9EPR2"/>
<dbReference type="ProteomicsDB" id="288128">
    <molecule id="Q9EPR2-1"/>
</dbReference>
<dbReference type="ProteomicsDB" id="288129">
    <molecule id="Q9EPR2-2"/>
</dbReference>
<dbReference type="Antibodypedia" id="26354">
    <property type="antibodies" value="213 antibodies from 28 providers"/>
</dbReference>
<dbReference type="DNASU" id="66350"/>
<dbReference type="Ensembl" id="ENSMUST00000029629.15">
    <molecule id="Q9EPR2-1"/>
    <property type="protein sequence ID" value="ENSMUSP00000029629.9"/>
    <property type="gene ID" value="ENSMUSG00000027999.16"/>
</dbReference>
<dbReference type="Ensembl" id="ENSMUST00000061165.9">
    <molecule id="Q9EPR2-2"/>
    <property type="protein sequence ID" value="ENSMUSP00000053651.7"/>
    <property type="gene ID" value="ENSMUSG00000027999.16"/>
</dbReference>
<dbReference type="GeneID" id="66350"/>
<dbReference type="KEGG" id="mmu:66350"/>
<dbReference type="UCSC" id="uc008rip.3">
    <molecule id="Q9EPR2-2"/>
    <property type="organism name" value="mouse"/>
</dbReference>
<dbReference type="UCSC" id="uc012cxt.2">
    <molecule id="Q9EPR2-1"/>
    <property type="organism name" value="mouse"/>
</dbReference>
<dbReference type="AGR" id="MGI:1913600"/>
<dbReference type="CTD" id="81579"/>
<dbReference type="MGI" id="MGI:1913600">
    <property type="gene designation" value="Pla2g12a"/>
</dbReference>
<dbReference type="VEuPathDB" id="HostDB:ENSMUSG00000027999"/>
<dbReference type="eggNOG" id="ENOG502QU22">
    <property type="taxonomic scope" value="Eukaryota"/>
</dbReference>
<dbReference type="GeneTree" id="ENSGT00390000008798"/>
<dbReference type="HOGENOM" id="CLU_093969_1_0_1"/>
<dbReference type="InParanoid" id="Q9EPR2"/>
<dbReference type="OMA" id="RAACMCQ"/>
<dbReference type="OrthoDB" id="3935740at2759"/>
<dbReference type="PhylomeDB" id="Q9EPR2"/>
<dbReference type="TreeFam" id="TF323302"/>
<dbReference type="Reactome" id="R-MMU-1482788">
    <property type="pathway name" value="Acyl chain remodelling of PC"/>
</dbReference>
<dbReference type="Reactome" id="R-MMU-1482801">
    <property type="pathway name" value="Acyl chain remodelling of PS"/>
</dbReference>
<dbReference type="Reactome" id="R-MMU-1482839">
    <property type="pathway name" value="Acyl chain remodelling of PE"/>
</dbReference>
<dbReference type="Reactome" id="R-MMU-1482922">
    <property type="pathway name" value="Acyl chain remodelling of PI"/>
</dbReference>
<dbReference type="Reactome" id="R-MMU-1482925">
    <property type="pathway name" value="Acyl chain remodelling of PG"/>
</dbReference>
<dbReference type="Reactome" id="R-MMU-1483166">
    <property type="pathway name" value="Synthesis of PA"/>
</dbReference>
<dbReference type="BioGRID-ORCS" id="66350">
    <property type="hits" value="5 hits in 78 CRISPR screens"/>
</dbReference>
<dbReference type="PRO" id="PR:Q9EPR2"/>
<dbReference type="Proteomes" id="UP000000589">
    <property type="component" value="Chromosome 3"/>
</dbReference>
<dbReference type="RNAct" id="Q9EPR2">
    <property type="molecule type" value="protein"/>
</dbReference>
<dbReference type="Bgee" id="ENSMUSG00000027999">
    <property type="expression patterns" value="Expressed in ileal epithelium and 231 other cell types or tissues"/>
</dbReference>
<dbReference type="ExpressionAtlas" id="Q9EPR2">
    <property type="expression patterns" value="baseline and differential"/>
</dbReference>
<dbReference type="GO" id="GO:0005737">
    <property type="term" value="C:cytoplasm"/>
    <property type="evidence" value="ECO:0007669"/>
    <property type="project" value="UniProtKB-SubCell"/>
</dbReference>
<dbReference type="GO" id="GO:0005783">
    <property type="term" value="C:endoplasmic reticulum"/>
    <property type="evidence" value="ECO:0000314"/>
    <property type="project" value="MGI"/>
</dbReference>
<dbReference type="GO" id="GO:0005576">
    <property type="term" value="C:extracellular region"/>
    <property type="evidence" value="ECO:0007669"/>
    <property type="project" value="UniProtKB-SubCell"/>
</dbReference>
<dbReference type="GO" id="GO:0005794">
    <property type="term" value="C:Golgi apparatus"/>
    <property type="evidence" value="ECO:0000314"/>
    <property type="project" value="MGI"/>
</dbReference>
<dbReference type="GO" id="GO:0005509">
    <property type="term" value="F:calcium ion binding"/>
    <property type="evidence" value="ECO:0007669"/>
    <property type="project" value="InterPro"/>
</dbReference>
<dbReference type="GO" id="GO:0004623">
    <property type="term" value="F:phospholipase A2 activity"/>
    <property type="evidence" value="ECO:0000314"/>
    <property type="project" value="MGI"/>
</dbReference>
<dbReference type="GO" id="GO:0050482">
    <property type="term" value="P:arachidonate secretion"/>
    <property type="evidence" value="ECO:0007669"/>
    <property type="project" value="InterPro"/>
</dbReference>
<dbReference type="GO" id="GO:0016042">
    <property type="term" value="P:lipid catabolic process"/>
    <property type="evidence" value="ECO:0000305"/>
    <property type="project" value="MGI"/>
</dbReference>
<dbReference type="GO" id="GO:0006644">
    <property type="term" value="P:phospholipid metabolic process"/>
    <property type="evidence" value="ECO:0007669"/>
    <property type="project" value="InterPro"/>
</dbReference>
<dbReference type="FunFam" id="1.20.90.10:FF:000004">
    <property type="entry name" value="Group XIIA secretory phospholipase A2"/>
    <property type="match status" value="1"/>
</dbReference>
<dbReference type="Gene3D" id="1.20.90.10">
    <property type="entry name" value="Phospholipase A2 domain"/>
    <property type="match status" value="1"/>
</dbReference>
<dbReference type="InterPro" id="IPR010711">
    <property type="entry name" value="PLA2G12"/>
</dbReference>
<dbReference type="InterPro" id="IPR036444">
    <property type="entry name" value="PLipase_A2_dom_sf"/>
</dbReference>
<dbReference type="InterPro" id="IPR033113">
    <property type="entry name" value="PLipase_A2_His_AS"/>
</dbReference>
<dbReference type="PANTHER" id="PTHR12824">
    <property type="entry name" value="GROUP XII SECRETORY PHOSPHOLIPASE A2 FAMILY MEMBER"/>
    <property type="match status" value="1"/>
</dbReference>
<dbReference type="PANTHER" id="PTHR12824:SF7">
    <property type="entry name" value="GROUP XIIA SECRETORY PHOSPHOLIPASE A2"/>
    <property type="match status" value="1"/>
</dbReference>
<dbReference type="Pfam" id="PF06951">
    <property type="entry name" value="PLA2G12"/>
    <property type="match status" value="1"/>
</dbReference>
<dbReference type="SUPFAM" id="SSF48619">
    <property type="entry name" value="Phospholipase A2, PLA2"/>
    <property type="match status" value="1"/>
</dbReference>
<dbReference type="PROSITE" id="PS00118">
    <property type="entry name" value="PA2_HIS"/>
    <property type="match status" value="1"/>
</dbReference>
<sequence>MVTPRPAPARSPALLLLLLLATARGQEQDQTTDWRATLKTIRNGIHKIDTYLNAALDLLGGEDGLCQYKCSDGSKPVPRYGYKPSPPNGCGSPLFGVHLNIGIPSLTKCCNQHDRCYETCGKSKNDCDEEFQYCLSKICRDVQKTLGLSQNVQACETTVELLFDSVIHLGCKPYLDSQRAACWCRYEEKTDL</sequence>